<sequence length="349" mass="37624">MALAGAPVAARSPRAVQVWLYAVAALIVLMVVVGGATRLTESGLSITEWKPITGALPPLSEADWQAEFDRYKTIPQYEILNKGMGLEAFKTIYWWEWGHRLLGRVIGLAFFLPFLYFALTGALRGTLLARCFGLFLLGGLQGAVGWWMVASGLTEHTSVSQYRLAVHLTLACIILTAIVAVARSLSPLAAQALPARVRLTARVLVGLVLLQIFAGGLVAGLDAGMSFNTWPLMDGHLVPAAGQLGAMQPLWRNLFENAMTVQFVHRSIAYLIFALAFLHLLDCLRLGGTAARRATLVFALVAAQAMLGILTLVHMVPLDLALAHQLGATLVLIAAMIHASDSNRRQIVA</sequence>
<evidence type="ECO:0000255" key="1">
    <source>
        <dbReference type="HAMAP-Rule" id="MF_01665"/>
    </source>
</evidence>
<comment type="function">
    <text evidence="1">Catalyzes the conversion of heme O to heme A by two successive hydroxylations of the methyl group at C8. The first hydroxylation forms heme I, the second hydroxylation results in an unstable dihydroxymethyl group, which spontaneously dehydrates, resulting in the formyl group of heme A.</text>
</comment>
<comment type="catalytic activity">
    <reaction evidence="1">
        <text>Fe(II)-heme o + 2 A + H2O = Fe(II)-heme a + 2 AH2</text>
        <dbReference type="Rhea" id="RHEA:63388"/>
        <dbReference type="ChEBI" id="CHEBI:13193"/>
        <dbReference type="ChEBI" id="CHEBI:15377"/>
        <dbReference type="ChEBI" id="CHEBI:17499"/>
        <dbReference type="ChEBI" id="CHEBI:60530"/>
        <dbReference type="ChEBI" id="CHEBI:61715"/>
        <dbReference type="EC" id="1.17.99.9"/>
    </reaction>
    <physiologicalReaction direction="left-to-right" evidence="1">
        <dbReference type="Rhea" id="RHEA:63389"/>
    </physiologicalReaction>
</comment>
<comment type="cofactor">
    <cofactor evidence="1">
        <name>heme b</name>
        <dbReference type="ChEBI" id="CHEBI:60344"/>
    </cofactor>
</comment>
<comment type="pathway">
    <text evidence="1">Porphyrin-containing compound metabolism; heme A biosynthesis; heme A from heme O: step 1/1.</text>
</comment>
<comment type="subunit">
    <text evidence="1">Interacts with CtaB.</text>
</comment>
<comment type="subcellular location">
    <subcellularLocation>
        <location evidence="1">Cell membrane</location>
        <topology evidence="1">Multi-pass membrane protein</topology>
    </subcellularLocation>
</comment>
<comment type="similarity">
    <text evidence="1">Belongs to the COX15/CtaA family. Type 2 subfamily.</text>
</comment>
<proteinExistence type="inferred from homology"/>
<feature type="chain" id="PRO_0000349011" description="Heme A synthase">
    <location>
        <begin position="1"/>
        <end position="349"/>
    </location>
</feature>
<feature type="transmembrane region" description="Helical" evidence="1">
    <location>
        <begin position="15"/>
        <end position="35"/>
    </location>
</feature>
<feature type="transmembrane region" description="Helical" evidence="1">
    <location>
        <begin position="101"/>
        <end position="121"/>
    </location>
</feature>
<feature type="transmembrane region" description="Helical" evidence="1">
    <location>
        <begin position="132"/>
        <end position="152"/>
    </location>
</feature>
<feature type="transmembrane region" description="Helical" evidence="1">
    <location>
        <begin position="162"/>
        <end position="182"/>
    </location>
</feature>
<feature type="transmembrane region" description="Helical" evidence="1">
    <location>
        <begin position="203"/>
        <end position="223"/>
    </location>
</feature>
<feature type="transmembrane region" description="Helical" evidence="1">
    <location>
        <begin position="268"/>
        <end position="288"/>
    </location>
</feature>
<feature type="transmembrane region" description="Helical" evidence="1">
    <location>
        <begin position="296"/>
        <end position="316"/>
    </location>
</feature>
<feature type="transmembrane region" description="Helical" evidence="1">
    <location>
        <begin position="317"/>
        <end position="337"/>
    </location>
</feature>
<feature type="binding site" description="axial binding residue" evidence="1">
    <location>
        <position position="265"/>
    </location>
    <ligand>
        <name>heme</name>
        <dbReference type="ChEBI" id="CHEBI:30413"/>
    </ligand>
    <ligandPart>
        <name>Fe</name>
        <dbReference type="ChEBI" id="CHEBI:18248"/>
    </ligandPart>
</feature>
<feature type="binding site" description="axial binding residue" evidence="1">
    <location>
        <position position="324"/>
    </location>
    <ligand>
        <name>heme</name>
        <dbReference type="ChEBI" id="CHEBI:30413"/>
    </ligand>
    <ligandPart>
        <name>Fe</name>
        <dbReference type="ChEBI" id="CHEBI:18248"/>
    </ligandPart>
</feature>
<accession>A8I7Y5</accession>
<organism>
    <name type="scientific">Azorhizobium caulinodans (strain ATCC 43989 / DSM 5975 / JCM 20966 / LMG 6465 / NBRC 14845 / NCIMB 13405 / ORS 571)</name>
    <dbReference type="NCBI Taxonomy" id="438753"/>
    <lineage>
        <taxon>Bacteria</taxon>
        <taxon>Pseudomonadati</taxon>
        <taxon>Pseudomonadota</taxon>
        <taxon>Alphaproteobacteria</taxon>
        <taxon>Hyphomicrobiales</taxon>
        <taxon>Xanthobacteraceae</taxon>
        <taxon>Azorhizobium</taxon>
    </lineage>
</organism>
<dbReference type="EC" id="1.17.99.9" evidence="1"/>
<dbReference type="EMBL" id="AP009384">
    <property type="protein sequence ID" value="BAF88182.1"/>
    <property type="molecule type" value="Genomic_DNA"/>
</dbReference>
<dbReference type="SMR" id="A8I7Y5"/>
<dbReference type="STRING" id="438753.AZC_2184"/>
<dbReference type="KEGG" id="azc:AZC_2184"/>
<dbReference type="eggNOG" id="COG1612">
    <property type="taxonomic scope" value="Bacteria"/>
</dbReference>
<dbReference type="HOGENOM" id="CLU_017627_0_0_5"/>
<dbReference type="UniPathway" id="UPA00269">
    <property type="reaction ID" value="UER00713"/>
</dbReference>
<dbReference type="Proteomes" id="UP000000270">
    <property type="component" value="Chromosome"/>
</dbReference>
<dbReference type="GO" id="GO:0005886">
    <property type="term" value="C:plasma membrane"/>
    <property type="evidence" value="ECO:0007669"/>
    <property type="project" value="UniProtKB-SubCell"/>
</dbReference>
<dbReference type="GO" id="GO:0046872">
    <property type="term" value="F:metal ion binding"/>
    <property type="evidence" value="ECO:0007669"/>
    <property type="project" value="UniProtKB-KW"/>
</dbReference>
<dbReference type="GO" id="GO:0016653">
    <property type="term" value="F:oxidoreductase activity, acting on NAD(P)H, heme protein as acceptor"/>
    <property type="evidence" value="ECO:0007669"/>
    <property type="project" value="InterPro"/>
</dbReference>
<dbReference type="GO" id="GO:0006784">
    <property type="term" value="P:heme A biosynthetic process"/>
    <property type="evidence" value="ECO:0007669"/>
    <property type="project" value="UniProtKB-UniRule"/>
</dbReference>
<dbReference type="HAMAP" id="MF_01665">
    <property type="entry name" value="HemeA_synth_type2"/>
    <property type="match status" value="1"/>
</dbReference>
<dbReference type="InterPro" id="IPR003780">
    <property type="entry name" value="COX15/CtaA_fam"/>
</dbReference>
<dbReference type="InterPro" id="IPR023754">
    <property type="entry name" value="HemeA_Synthase_type2"/>
</dbReference>
<dbReference type="PANTHER" id="PTHR23289">
    <property type="entry name" value="CYTOCHROME C OXIDASE ASSEMBLY PROTEIN COX15"/>
    <property type="match status" value="1"/>
</dbReference>
<dbReference type="PANTHER" id="PTHR23289:SF2">
    <property type="entry name" value="CYTOCHROME C OXIDASE ASSEMBLY PROTEIN COX15 HOMOLOG"/>
    <property type="match status" value="1"/>
</dbReference>
<dbReference type="Pfam" id="PF02628">
    <property type="entry name" value="COX15-CtaA"/>
    <property type="match status" value="1"/>
</dbReference>
<keyword id="KW-1003">Cell membrane</keyword>
<keyword id="KW-0350">Heme biosynthesis</keyword>
<keyword id="KW-0408">Iron</keyword>
<keyword id="KW-0472">Membrane</keyword>
<keyword id="KW-0479">Metal-binding</keyword>
<keyword id="KW-0560">Oxidoreductase</keyword>
<keyword id="KW-1185">Reference proteome</keyword>
<keyword id="KW-0812">Transmembrane</keyword>
<keyword id="KW-1133">Transmembrane helix</keyword>
<gene>
    <name evidence="1" type="primary">ctaA</name>
    <name type="ordered locus">AZC_2184</name>
</gene>
<reference key="1">
    <citation type="submission" date="2007-04" db="EMBL/GenBank/DDBJ databases">
        <title>Complete genome sequence of the nitrogen-fixing bacterium Azorhizobium caulinodans ORS571.</title>
        <authorList>
            <person name="Lee K.B."/>
            <person name="Backer P.D."/>
            <person name="Aono T."/>
            <person name="Liu C.T."/>
            <person name="Suzuki S."/>
            <person name="Suzuki T."/>
            <person name="Kaneko T."/>
            <person name="Yamada M."/>
            <person name="Tabata S."/>
            <person name="Kupfer D.M."/>
            <person name="Najar F.Z."/>
            <person name="Wiley G.B."/>
            <person name="Roe B."/>
            <person name="Binnewies T."/>
            <person name="Ussery D."/>
            <person name="Vereecke D."/>
            <person name="Gevers D."/>
            <person name="Holsters M."/>
            <person name="Oyaizu H."/>
        </authorList>
    </citation>
    <scope>NUCLEOTIDE SEQUENCE [LARGE SCALE GENOMIC DNA]</scope>
    <source>
        <strain>ATCC 43989 / DSM 5975 / JCM 20966 / LMG 6465 / NBRC 14845 / NCIMB 13405 / ORS 571</strain>
    </source>
</reference>
<name>CTAA_AZOC5</name>
<protein>
    <recommendedName>
        <fullName evidence="1">Heme A synthase</fullName>
        <shortName evidence="1">HAS</shortName>
        <ecNumber evidence="1">1.17.99.9</ecNumber>
    </recommendedName>
    <alternativeName>
        <fullName evidence="1">Cytochrome aa3-controlling protein</fullName>
    </alternativeName>
</protein>